<organism>
    <name type="scientific">Escherichia coli (strain SMS-3-5 / SECEC)</name>
    <dbReference type="NCBI Taxonomy" id="439855"/>
    <lineage>
        <taxon>Bacteria</taxon>
        <taxon>Pseudomonadati</taxon>
        <taxon>Pseudomonadota</taxon>
        <taxon>Gammaproteobacteria</taxon>
        <taxon>Enterobacterales</taxon>
        <taxon>Enterobacteriaceae</taxon>
        <taxon>Escherichia</taxon>
    </lineage>
</organism>
<proteinExistence type="inferred from homology"/>
<sequence>MAKVLVLYYSMYGHIETMARAVAEGASKVDGAEVVVKRVPETMPPQLFEKAGGKTQTAPVATPQELADYDAIIFGTPTRFGNMSGQMRTFLDQTGGLWASGALYGKLASVFSSTGTGGGQEQTITSTWTTLAHHGMVIVPIGYAAQELFDVSQVRGGTPYGATTIAGGDGSRQPSQEELSIARYQGEYVAGLAVKLNG</sequence>
<gene>
    <name type="ordered locus">EcSMS35_2120</name>
</gene>
<comment type="catalytic activity">
    <reaction evidence="1">
        <text>a quinone + NADH + H(+) = a quinol + NAD(+)</text>
        <dbReference type="Rhea" id="RHEA:46160"/>
        <dbReference type="ChEBI" id="CHEBI:15378"/>
        <dbReference type="ChEBI" id="CHEBI:24646"/>
        <dbReference type="ChEBI" id="CHEBI:57540"/>
        <dbReference type="ChEBI" id="CHEBI:57945"/>
        <dbReference type="ChEBI" id="CHEBI:132124"/>
        <dbReference type="EC" id="1.6.5.2"/>
    </reaction>
</comment>
<comment type="catalytic activity">
    <reaction evidence="1">
        <text>a quinone + NADPH + H(+) = a quinol + NADP(+)</text>
        <dbReference type="Rhea" id="RHEA:46164"/>
        <dbReference type="ChEBI" id="CHEBI:15378"/>
        <dbReference type="ChEBI" id="CHEBI:24646"/>
        <dbReference type="ChEBI" id="CHEBI:57783"/>
        <dbReference type="ChEBI" id="CHEBI:58349"/>
        <dbReference type="ChEBI" id="CHEBI:132124"/>
        <dbReference type="EC" id="1.6.5.2"/>
    </reaction>
</comment>
<comment type="cofactor">
    <cofactor evidence="1">
        <name>FMN</name>
        <dbReference type="ChEBI" id="CHEBI:58210"/>
    </cofactor>
    <text evidence="1">Binds 1 FMN per monomer.</text>
</comment>
<comment type="similarity">
    <text evidence="1">Belongs to the WrbA family.</text>
</comment>
<feature type="chain" id="PRO_1000200624" description="NAD(P)H dehydrogenase (quinone)">
    <location>
        <begin position="1"/>
        <end position="198"/>
    </location>
</feature>
<feature type="domain" description="Flavodoxin-like" evidence="1">
    <location>
        <begin position="4"/>
        <end position="189"/>
    </location>
</feature>
<feature type="binding site" evidence="1">
    <location>
        <begin position="10"/>
        <end position="15"/>
    </location>
    <ligand>
        <name>FMN</name>
        <dbReference type="ChEBI" id="CHEBI:58210"/>
    </ligand>
</feature>
<feature type="binding site" evidence="1">
    <location>
        <position position="12"/>
    </location>
    <ligand>
        <name>NAD(+)</name>
        <dbReference type="ChEBI" id="CHEBI:57540"/>
    </ligand>
</feature>
<feature type="binding site" evidence="1">
    <location>
        <begin position="78"/>
        <end position="80"/>
    </location>
    <ligand>
        <name>FMN</name>
        <dbReference type="ChEBI" id="CHEBI:58210"/>
    </ligand>
</feature>
<feature type="binding site" evidence="1">
    <location>
        <position position="98"/>
    </location>
    <ligand>
        <name>substrate</name>
    </ligand>
</feature>
<feature type="binding site" evidence="1">
    <location>
        <begin position="113"/>
        <end position="118"/>
    </location>
    <ligand>
        <name>FMN</name>
        <dbReference type="ChEBI" id="CHEBI:58210"/>
    </ligand>
</feature>
<feature type="binding site" evidence="1">
    <location>
        <position position="133"/>
    </location>
    <ligand>
        <name>FMN</name>
        <dbReference type="ChEBI" id="CHEBI:58210"/>
    </ligand>
</feature>
<keyword id="KW-0285">Flavoprotein</keyword>
<keyword id="KW-0288">FMN</keyword>
<keyword id="KW-0520">NAD</keyword>
<keyword id="KW-0521">NADP</keyword>
<keyword id="KW-0547">Nucleotide-binding</keyword>
<keyword id="KW-0560">Oxidoreductase</keyword>
<reference key="1">
    <citation type="journal article" date="2008" name="J. Bacteriol.">
        <title>Insights into the environmental resistance gene pool from the genome sequence of the multidrug-resistant environmental isolate Escherichia coli SMS-3-5.</title>
        <authorList>
            <person name="Fricke W.F."/>
            <person name="Wright M.S."/>
            <person name="Lindell A.H."/>
            <person name="Harkins D.M."/>
            <person name="Baker-Austin C."/>
            <person name="Ravel J."/>
            <person name="Stepanauskas R."/>
        </authorList>
    </citation>
    <scope>NUCLEOTIDE SEQUENCE [LARGE SCALE GENOMIC DNA]</scope>
    <source>
        <strain>SMS-3-5 / SECEC</strain>
    </source>
</reference>
<protein>
    <recommendedName>
        <fullName evidence="1">NAD(P)H dehydrogenase (quinone)</fullName>
        <ecNumber evidence="1">1.6.5.2</ecNumber>
    </recommendedName>
    <alternativeName>
        <fullName>Flavoprotein WrbA</fullName>
    </alternativeName>
    <alternativeName>
        <fullName evidence="1">NAD(P)H:quinone oxidoreductase</fullName>
        <shortName evidence="1">NQO</shortName>
    </alternativeName>
</protein>
<name>NQOR_ECOSM</name>
<dbReference type="EC" id="1.6.5.2" evidence="1"/>
<dbReference type="EMBL" id="CP000970">
    <property type="protein sequence ID" value="ACB20080.1"/>
    <property type="molecule type" value="Genomic_DNA"/>
</dbReference>
<dbReference type="SMR" id="B1LJ00"/>
<dbReference type="KEGG" id="ecm:EcSMS35_2120"/>
<dbReference type="HOGENOM" id="CLU_051402_0_2_6"/>
<dbReference type="Proteomes" id="UP000007011">
    <property type="component" value="Chromosome"/>
</dbReference>
<dbReference type="GO" id="GO:0016020">
    <property type="term" value="C:membrane"/>
    <property type="evidence" value="ECO:0007669"/>
    <property type="project" value="TreeGrafter"/>
</dbReference>
<dbReference type="GO" id="GO:0050660">
    <property type="term" value="F:flavin adenine dinucleotide binding"/>
    <property type="evidence" value="ECO:0007669"/>
    <property type="project" value="UniProtKB-UniRule"/>
</dbReference>
<dbReference type="GO" id="GO:0010181">
    <property type="term" value="F:FMN binding"/>
    <property type="evidence" value="ECO:0007669"/>
    <property type="project" value="InterPro"/>
</dbReference>
<dbReference type="GO" id="GO:0051287">
    <property type="term" value="F:NAD binding"/>
    <property type="evidence" value="ECO:0007669"/>
    <property type="project" value="UniProtKB-UniRule"/>
</dbReference>
<dbReference type="GO" id="GO:0050136">
    <property type="term" value="F:NADH:ubiquinone reductase (non-electrogenic) activity"/>
    <property type="evidence" value="ECO:0007669"/>
    <property type="project" value="RHEA"/>
</dbReference>
<dbReference type="GO" id="GO:0050661">
    <property type="term" value="F:NADP binding"/>
    <property type="evidence" value="ECO:0007669"/>
    <property type="project" value="UniProtKB-UniRule"/>
</dbReference>
<dbReference type="GO" id="GO:0008753">
    <property type="term" value="F:NADPH dehydrogenase (quinone) activity"/>
    <property type="evidence" value="ECO:0007669"/>
    <property type="project" value="RHEA"/>
</dbReference>
<dbReference type="FunFam" id="3.40.50.360:FF:000004">
    <property type="entry name" value="NAD(P)H dehydrogenase (quinone)"/>
    <property type="match status" value="1"/>
</dbReference>
<dbReference type="Gene3D" id="3.40.50.360">
    <property type="match status" value="1"/>
</dbReference>
<dbReference type="HAMAP" id="MF_01017">
    <property type="entry name" value="NQOR"/>
    <property type="match status" value="1"/>
</dbReference>
<dbReference type="InterPro" id="IPR008254">
    <property type="entry name" value="Flavodoxin/NO_synth"/>
</dbReference>
<dbReference type="InterPro" id="IPR029039">
    <property type="entry name" value="Flavoprotein-like_sf"/>
</dbReference>
<dbReference type="InterPro" id="IPR010089">
    <property type="entry name" value="Flavoprotein_WrbA-like"/>
</dbReference>
<dbReference type="InterPro" id="IPR005025">
    <property type="entry name" value="FMN_Rdtase-like_dom"/>
</dbReference>
<dbReference type="InterPro" id="IPR037513">
    <property type="entry name" value="NQO"/>
</dbReference>
<dbReference type="NCBIfam" id="TIGR01755">
    <property type="entry name" value="flav_wrbA"/>
    <property type="match status" value="1"/>
</dbReference>
<dbReference type="NCBIfam" id="NF002999">
    <property type="entry name" value="PRK03767.1"/>
    <property type="match status" value="1"/>
</dbReference>
<dbReference type="PANTHER" id="PTHR30546">
    <property type="entry name" value="FLAVODOXIN-RELATED PROTEIN WRBA-RELATED"/>
    <property type="match status" value="1"/>
</dbReference>
<dbReference type="PANTHER" id="PTHR30546:SF23">
    <property type="entry name" value="FLAVOPROTEIN-LIKE PROTEIN YCP4-RELATED"/>
    <property type="match status" value="1"/>
</dbReference>
<dbReference type="Pfam" id="PF03358">
    <property type="entry name" value="FMN_red"/>
    <property type="match status" value="1"/>
</dbReference>
<dbReference type="SUPFAM" id="SSF52218">
    <property type="entry name" value="Flavoproteins"/>
    <property type="match status" value="1"/>
</dbReference>
<dbReference type="PROSITE" id="PS50902">
    <property type="entry name" value="FLAVODOXIN_LIKE"/>
    <property type="match status" value="1"/>
</dbReference>
<accession>B1LJ00</accession>
<evidence type="ECO:0000255" key="1">
    <source>
        <dbReference type="HAMAP-Rule" id="MF_01017"/>
    </source>
</evidence>